<feature type="signal peptide" evidence="2">
    <location>
        <begin position="1"/>
        <end position="21"/>
    </location>
</feature>
<feature type="propeptide" id="PRO_0000029174" evidence="1">
    <location>
        <begin position="22"/>
        <end position="244"/>
    </location>
</feature>
<feature type="chain" id="PRO_0000029175" description="A disintegrin and metalloproteinase with thrombospondin motifs 6">
    <location>
        <begin position="245"/>
        <end position="1117"/>
    </location>
</feature>
<feature type="domain" description="Peptidase M12B" evidence="5">
    <location>
        <begin position="250"/>
        <end position="468"/>
    </location>
</feature>
<feature type="domain" description="Disintegrin">
    <location>
        <begin position="495"/>
        <end position="557"/>
    </location>
</feature>
<feature type="domain" description="TSP type-1 1" evidence="3">
    <location>
        <begin position="558"/>
        <end position="613"/>
    </location>
</feature>
<feature type="domain" description="TSP type-1 2" evidence="3">
    <location>
        <begin position="840"/>
        <end position="900"/>
    </location>
</feature>
<feature type="domain" description="TSP type-1 3" evidence="3">
    <location>
        <begin position="902"/>
        <end position="960"/>
    </location>
</feature>
<feature type="domain" description="TSP type-1 4" evidence="3">
    <location>
        <begin position="962"/>
        <end position="1007"/>
    </location>
</feature>
<feature type="domain" description="TSP type-1 5" evidence="3">
    <location>
        <begin position="1018"/>
        <end position="1073"/>
    </location>
</feature>
<feature type="domain" description="PLAC" evidence="4">
    <location>
        <begin position="1079"/>
        <end position="1117"/>
    </location>
</feature>
<feature type="region of interest" description="Spacer">
    <location>
        <begin position="717"/>
        <end position="843"/>
    </location>
</feature>
<feature type="active site" evidence="5 6">
    <location>
        <position position="404"/>
    </location>
</feature>
<feature type="binding site" evidence="1">
    <location>
        <position position="403"/>
    </location>
    <ligand>
        <name>Zn(2+)</name>
        <dbReference type="ChEBI" id="CHEBI:29105"/>
        <note>catalytic</note>
    </ligand>
</feature>
<feature type="binding site" evidence="1">
    <location>
        <position position="407"/>
    </location>
    <ligand>
        <name>Zn(2+)</name>
        <dbReference type="ChEBI" id="CHEBI:29105"/>
        <note>catalytic</note>
    </ligand>
</feature>
<feature type="binding site" evidence="1">
    <location>
        <position position="413"/>
    </location>
    <ligand>
        <name>Zn(2+)</name>
        <dbReference type="ChEBI" id="CHEBI:29105"/>
        <note>catalytic</note>
    </ligand>
</feature>
<feature type="glycosylation site" description="N-linked (GlcNAc...) asparagine" evidence="2">
    <location>
        <position position="99"/>
    </location>
</feature>
<feature type="glycosylation site" description="N-linked (GlcNAc...) asparagine" evidence="2">
    <location>
        <position position="172"/>
    </location>
</feature>
<feature type="glycosylation site" description="N-linked (GlcNAc...) asparagine" evidence="2">
    <location>
        <position position="222"/>
    </location>
</feature>
<feature type="glycosylation site" description="N-linked (GlcNAc...) asparagine" evidence="2">
    <location>
        <position position="234"/>
    </location>
</feature>
<feature type="glycosylation site" description="N-linked (GlcNAc...) asparagine" evidence="2">
    <location>
        <position position="724"/>
    </location>
</feature>
<feature type="glycosylation site" description="N-linked (GlcNAc...) asparagine" evidence="2">
    <location>
        <position position="956"/>
    </location>
</feature>
<feature type="disulfide bond" evidence="1">
    <location>
        <begin position="326"/>
        <end position="387"/>
    </location>
</feature>
<feature type="disulfide bond" evidence="1">
    <location>
        <begin position="362"/>
        <end position="369"/>
    </location>
</feature>
<feature type="disulfide bond" evidence="1">
    <location>
        <begin position="381"/>
        <end position="463"/>
    </location>
</feature>
<feature type="disulfide bond" evidence="1">
    <location>
        <begin position="420"/>
        <end position="447"/>
    </location>
</feature>
<feature type="disulfide bond" evidence="1">
    <location>
        <begin position="490"/>
        <end position="512"/>
    </location>
</feature>
<feature type="disulfide bond" evidence="1">
    <location>
        <begin position="501"/>
        <end position="519"/>
    </location>
</feature>
<feature type="disulfide bond" evidence="1">
    <location>
        <begin position="507"/>
        <end position="542"/>
    </location>
</feature>
<feature type="disulfide bond" evidence="1">
    <location>
        <begin position="532"/>
        <end position="547"/>
    </location>
</feature>
<feature type="disulfide bond" evidence="1">
    <location>
        <begin position="570"/>
        <end position="607"/>
    </location>
</feature>
<feature type="disulfide bond" evidence="1">
    <location>
        <begin position="574"/>
        <end position="612"/>
    </location>
</feature>
<feature type="disulfide bond" evidence="1">
    <location>
        <begin position="585"/>
        <end position="597"/>
    </location>
</feature>
<feature type="disulfide bond" evidence="1">
    <location>
        <begin position="911"/>
        <end position="954"/>
    </location>
</feature>
<feature type="disulfide bond" evidence="1">
    <location>
        <begin position="915"/>
        <end position="959"/>
    </location>
</feature>
<feature type="disulfide bond" evidence="1">
    <location>
        <begin position="926"/>
        <end position="943"/>
    </location>
</feature>
<feature type="splice variant" id="VSP_037093" description="In isoform 4." evidence="10">
    <original>AKLYRDSSLG</original>
    <variation>RLPNFTVIPA</variation>
    <location>
        <begin position="283"/>
        <end position="292"/>
    </location>
</feature>
<feature type="splice variant" id="VSP_037094" description="In isoform 4." evidence="10">
    <location>
        <begin position="293"/>
        <end position="1117"/>
    </location>
</feature>
<feature type="splice variant" id="VSP_037095" description="In isoform 2." evidence="9">
    <original>TKGHEAAKLMAAHITANTNPFSWSACSRDYITSFLDSGRGTCLDNEPPKRDFLYPAVAPGQVYDADEQCRFQYGATSRQCKYG</original>
    <variation>RKVMKQQNYGSSHYCEYQSFFLVCLQSRFHHQLFR</variation>
    <location>
        <begin position="422"/>
        <end position="504"/>
    </location>
</feature>
<feature type="splice variant" id="VSP_037096" description="In isoform 3." evidence="10">
    <original>DSGRGTCLDNEP</original>
    <variation>EFLKLGDSISGS</variation>
    <location>
        <begin position="457"/>
        <end position="468"/>
    </location>
</feature>
<feature type="splice variant" id="VSP_037097" description="In isoform 3." evidence="10">
    <location>
        <begin position="469"/>
        <end position="1117"/>
    </location>
</feature>
<feature type="splice variant" id="VSP_037098" description="In isoform 2." evidence="9">
    <original>VQRQEVVCKRLDDNSIVQNNYCDPDSKPPENQRACNTEPCPPEWFIGDW</original>
    <variation>KMPTRQPTQRARWRTKHILSYALCLLKKLIGNISCRFASSCNLAKETLL</variation>
    <location>
        <begin position="860"/>
        <end position="908"/>
    </location>
</feature>
<feature type="splice variant" id="VSP_037099" description="In isoform 2." evidence="9">
    <location>
        <begin position="909"/>
        <end position="1117"/>
    </location>
</feature>
<feature type="sequence conflict" description="In Ref. 2; AAW47399." evidence="11" ref="2">
    <original>L</original>
    <variation>S</variation>
    <location>
        <position position="4"/>
    </location>
</feature>
<feature type="sequence conflict" description="In Ref. 2; AAW47398." evidence="11" ref="2">
    <original>D</original>
    <variation>G</variation>
    <location>
        <position position="24"/>
    </location>
</feature>
<feature type="sequence conflict" description="In Ref. 2; AAW47398." evidence="11" ref="2">
    <original>S</original>
    <variation>P</variation>
    <location>
        <position position="83"/>
    </location>
</feature>
<feature type="sequence conflict" description="In Ref. 2; AAW47397." evidence="11" ref="2">
    <original>Y</original>
    <variation>H</variation>
    <location>
        <position position="229"/>
    </location>
</feature>
<feature type="sequence conflict" description="In Ref. 1; AAD56357." evidence="11" ref="1">
    <original>G</original>
    <variation>V</variation>
    <location>
        <position position="406"/>
    </location>
</feature>
<feature type="sequence conflict" description="In Ref. 1; AAD56357 and 2; AAW47397." evidence="11" ref="1 2">
    <original>E</original>
    <variation>G</variation>
    <location>
        <position position="426"/>
    </location>
</feature>
<feature type="sequence conflict" description="In Ref. 4; BAD92922." evidence="11" ref="4">
    <original>PA</original>
    <variation>LK</variation>
    <location>
        <begin position="588"/>
        <end position="589"/>
    </location>
</feature>
<feature type="sequence conflict" description="In Ref. 1; AAD56357." evidence="11" ref="1">
    <original>D</original>
    <variation>G</variation>
    <location>
        <position position="712"/>
    </location>
</feature>
<accession>Q9UKP5</accession>
<accession>Q59EX6</accession>
<accession>Q5IR87</accession>
<accession>Q5IR88</accession>
<accession>Q5IR89</accession>
<accession>Q68DL1</accession>
<proteinExistence type="evidence at protein level"/>
<keyword id="KW-0025">Alternative splicing</keyword>
<keyword id="KW-0165">Cleavage on pair of basic residues</keyword>
<keyword id="KW-1015">Disulfide bond</keyword>
<keyword id="KW-0272">Extracellular matrix</keyword>
<keyword id="KW-0325">Glycoprotein</keyword>
<keyword id="KW-0378">Hydrolase</keyword>
<keyword id="KW-0479">Metal-binding</keyword>
<keyword id="KW-0482">Metalloprotease</keyword>
<keyword id="KW-0645">Protease</keyword>
<keyword id="KW-1267">Proteomics identification</keyword>
<keyword id="KW-1185">Reference proteome</keyword>
<keyword id="KW-0677">Repeat</keyword>
<keyword id="KW-0964">Secreted</keyword>
<keyword id="KW-0732">Signal</keyword>
<keyword id="KW-0862">Zinc</keyword>
<keyword id="KW-0865">Zymogen</keyword>
<sequence length="1117" mass="125273">MEILWKTLTWILSLIMASSEFHSDHRLSYSSQEEFLTYLEHYQLTIPIRVDQNGAFLSFTVKNDKHSRRRRSMDPIDPQQAVSKLFFKLSAYGKHFHLNLTLNTDFVSKHFTVEYWGKDGPQWKHDFLDNCHYTGYLQDQRSTTKVALSNCVGLHGVIATEDEEYFIEPLKNTTEDSKHFSYENGHPHVIYKKSALQQRHLYDHSHCGVSDFTRSGKPWWLNDTSTVSYSLPINNTHIHHRQKRSVSIERFVETLVVADKMMVGYHGRKDIEHYILSVMNIVAKLYRDSSLGNVVNIIVARLIVLTEDQPNLEINHHADKSLDSFCKWQKSILSHQSDGNTIPENGIAHHDNAVLITRYDICTYKNKPCGTLGLASVAGMCEPERSCSINEDIGLGSAFTIAHEIGHNFGMNHDGIGNSCGTKGHEAAKLMAAHITANTNPFSWSACSRDYITSFLDSGRGTCLDNEPPKRDFLYPAVAPGQVYDADEQCRFQYGATSRQCKYGEVCRELWCLSKSNRCVTNSIPAAEGTLCQTGNIEKGWCYQGDCVPFGTWPQSIDGGWGPWSLWGECSRTCGGGVSSSLRHCDSPAPSGGGKYCLGERKRYRSCNTDPCPLGSRDFREKQCADFDNMPFRGKYYNWKPYTGGGVKPCALNCLAEGYNFYTERAPAVIDGTQCNADSLDICINGECKHVGCDNILGSDAREDRCRVCGGDGSTCDAIEGFFNDSLPRGGYMEVVQIPRGSVHIEVREVAMSKNYIALKSEGDDYYINGAWTIDWPRKFDVAGTAFHYKRPTDEPESLEALGPTSENLIVMVLLQEQNLGIRYKFNVPITRTGSGDNEVGFTWNHQPWSECSATCAGGVQRQEVVCKRLDDNSIVQNNYCDPDSKPPENQRACNTEPCPPEWFIGDWLECSKTCDGGMRTRAVLCIRKIGPSEEETLDYSGCLTHRPVEKEPCNNQSCPPQWVALDWSECTPKCGPGFKHRIVLCKSSDLSKTFPAAQCPEESKPPVRIRCSLGRCPPPRWVTGDWGQCSAQCGLGQQMRTVQCLSYTGQASSDCLETVRPPSMQQCESKCDSTPISNTEECKDVNKVAYCPLVLKFKFCSRAYFRQMCCKTCQGH</sequence>
<comment type="cofactor">
    <cofactor evidence="1">
        <name>Zn(2+)</name>
        <dbReference type="ChEBI" id="CHEBI:29105"/>
    </cofactor>
    <text evidence="1">Binds 1 zinc ion per subunit.</text>
</comment>
<comment type="subcellular location">
    <subcellularLocation>
        <location evidence="1">Secreted</location>
        <location evidence="1">Extracellular space</location>
        <location evidence="1">Extracellular matrix</location>
    </subcellularLocation>
</comment>
<comment type="alternative products">
    <event type="alternative splicing"/>
    <isoform>
        <id>Q9UKP5-1</id>
        <name>1</name>
        <name>Variant 2</name>
        <sequence type="displayed"/>
    </isoform>
    <isoform>
        <id>Q9UKP5-2</id>
        <name>2</name>
        <name>Variant 1</name>
        <sequence type="described" ref="VSP_037095 VSP_037098 VSP_037099"/>
    </isoform>
    <isoform>
        <id>Q9UKP5-3</id>
        <name>3</name>
        <name>Variant 3</name>
        <sequence type="described" ref="VSP_037096 VSP_037097"/>
    </isoform>
    <isoform>
        <id>Q9UKP5-4</id>
        <name>4</name>
        <name>Variant 4</name>
        <sequence type="described" ref="VSP_037093 VSP_037094"/>
    </isoform>
</comment>
<comment type="tissue specificity">
    <text>Expressed at low levels in placenta and barely detectable in a number of other tissues.</text>
</comment>
<comment type="induction">
    <text evidence="7 8">Isoform 1 and isoform 2 expressions are up-regulated by TNF in retinal pigment epithelial cells.</text>
</comment>
<comment type="domain">
    <text>The spacer domain and the TSP type-1 domains are important for a tight interaction with the extracellular matrix.</text>
</comment>
<comment type="PTM">
    <text evidence="1">The precursor is cleaved by a furin endopeptidase.</text>
</comment>
<comment type="PTM">
    <text evidence="1">Glycosylated. Can be O-fucosylated by POFUT2 on a serine or a threonine residue found within the consensus sequence C1-X(2)-(S/T)-C2-G of the TSP type-1 repeat domains where C1 and C2 are the first and second cysteine residue of the repeat, respectively. Fucosylated repeats can then be further glycosylated by the addition of a beta-1,3-glucose residue by the glucosyltransferase, B3GALTL. Fucosylation mediates the efficient secretion of ADAMTS family members. Can also be C-glycosylated with one or two mannose molecules on tryptophan residues within the consensus sequence W-X-X-W of the TPRs, and N-glycosylated. These other glycosylations can also facilitate secretion (By similarity).</text>
</comment>
<comment type="miscellaneous">
    <molecule>Isoform 2</molecule>
    <text evidence="11">Contains critical point mutations in the region encoding the catalytic domain as well as 2 point mutations compared with genomic sequence. May either be a rare polymorphism or may have arisen through a combination of aberrant RNA editing and point mutation/sequencing error.</text>
</comment>
<reference key="1">
    <citation type="journal article" date="1999" name="J. Biol. Chem.">
        <title>ADAM-TS5, ADAM-TS6, and ADAM-TS7, novel members of a new family of zinc metalloproteases.</title>
        <authorList>
            <person name="Hurskainen T.L."/>
            <person name="Hirohata S."/>
            <person name="Seldin M.F."/>
            <person name="Apte S.S."/>
        </authorList>
    </citation>
    <scope>NUCLEOTIDE SEQUENCE [MRNA] (ISOFORM 2)</scope>
</reference>
<reference key="2">
    <citation type="journal article" date="2005" name="Gene">
        <title>Analysis of full length ADAMTS6 transcript reveals alternative splicing and a role for the 5' untranslated region in translational control.</title>
        <authorList>
            <person name="Bevitt D.J."/>
            <person name="Li Z."/>
            <person name="Lindrop J.L."/>
            <person name="Barker M.D."/>
            <person name="Clarke M.P."/>
            <person name="McKie N."/>
        </authorList>
    </citation>
    <scope>NUCLEOTIDE SEQUENCE [MRNA] (ISOFORMS 1; 3 AND 4)</scope>
    <scope>INDUCTION</scope>
</reference>
<reference key="3">
    <citation type="journal article" date="2004" name="Nature">
        <title>The DNA sequence and comparative analysis of human chromosome 5.</title>
        <authorList>
            <person name="Schmutz J."/>
            <person name="Martin J."/>
            <person name="Terry A."/>
            <person name="Couronne O."/>
            <person name="Grimwood J."/>
            <person name="Lowry S."/>
            <person name="Gordon L.A."/>
            <person name="Scott D."/>
            <person name="Xie G."/>
            <person name="Huang W."/>
            <person name="Hellsten U."/>
            <person name="Tran-Gyamfi M."/>
            <person name="She X."/>
            <person name="Prabhakar S."/>
            <person name="Aerts A."/>
            <person name="Altherr M."/>
            <person name="Bajorek E."/>
            <person name="Black S."/>
            <person name="Branscomb E."/>
            <person name="Caoile C."/>
            <person name="Challacombe J.F."/>
            <person name="Chan Y.M."/>
            <person name="Denys M."/>
            <person name="Detter J.C."/>
            <person name="Escobar J."/>
            <person name="Flowers D."/>
            <person name="Fotopulos D."/>
            <person name="Glavina T."/>
            <person name="Gomez M."/>
            <person name="Gonzales E."/>
            <person name="Goodstein D."/>
            <person name="Grigoriev I."/>
            <person name="Groza M."/>
            <person name="Hammon N."/>
            <person name="Hawkins T."/>
            <person name="Haydu L."/>
            <person name="Israni S."/>
            <person name="Jett J."/>
            <person name="Kadner K."/>
            <person name="Kimball H."/>
            <person name="Kobayashi A."/>
            <person name="Lopez F."/>
            <person name="Lou Y."/>
            <person name="Martinez D."/>
            <person name="Medina C."/>
            <person name="Morgan J."/>
            <person name="Nandkeshwar R."/>
            <person name="Noonan J.P."/>
            <person name="Pitluck S."/>
            <person name="Pollard M."/>
            <person name="Predki P."/>
            <person name="Priest J."/>
            <person name="Ramirez L."/>
            <person name="Retterer J."/>
            <person name="Rodriguez A."/>
            <person name="Rogers S."/>
            <person name="Salamov A."/>
            <person name="Salazar A."/>
            <person name="Thayer N."/>
            <person name="Tice H."/>
            <person name="Tsai M."/>
            <person name="Ustaszewska A."/>
            <person name="Vo N."/>
            <person name="Wheeler J."/>
            <person name="Wu K."/>
            <person name="Yang J."/>
            <person name="Dickson M."/>
            <person name="Cheng J.-F."/>
            <person name="Eichler E.E."/>
            <person name="Olsen A."/>
            <person name="Pennacchio L.A."/>
            <person name="Rokhsar D.S."/>
            <person name="Richardson P."/>
            <person name="Lucas S.M."/>
            <person name="Myers R.M."/>
            <person name="Rubin E.M."/>
        </authorList>
    </citation>
    <scope>NUCLEOTIDE SEQUENCE [LARGE SCALE GENOMIC DNA]</scope>
</reference>
<reference key="4">
    <citation type="submission" date="2005-03" db="EMBL/GenBank/DDBJ databases">
        <authorList>
            <person name="Totoki Y."/>
            <person name="Toyoda A."/>
            <person name="Takeda T."/>
            <person name="Sakaki Y."/>
            <person name="Tanaka A."/>
            <person name="Yokoyama S."/>
            <person name="Ohara O."/>
            <person name="Nagase T."/>
            <person name="Kikuno R.F."/>
        </authorList>
    </citation>
    <scope>NUCLEOTIDE SEQUENCE [LARGE SCALE MRNA] OF 588-1117 (ISOFORM 1)</scope>
    <source>
        <tissue>Brain</tissue>
    </source>
</reference>
<reference key="5">
    <citation type="journal article" date="2007" name="BMC Genomics">
        <title>The full-ORF clone resource of the German cDNA consortium.</title>
        <authorList>
            <person name="Bechtel S."/>
            <person name="Rosenfelder H."/>
            <person name="Duda A."/>
            <person name="Schmidt C.P."/>
            <person name="Ernst U."/>
            <person name="Wellenreuther R."/>
            <person name="Mehrle A."/>
            <person name="Schuster C."/>
            <person name="Bahr A."/>
            <person name="Bloecker H."/>
            <person name="Heubner D."/>
            <person name="Hoerlein A."/>
            <person name="Michel G."/>
            <person name="Wedler H."/>
            <person name="Koehrer K."/>
            <person name="Ottenwaelder B."/>
            <person name="Poustka A."/>
            <person name="Wiemann S."/>
            <person name="Schupp I."/>
        </authorList>
    </citation>
    <scope>NUCLEOTIDE SEQUENCE [LARGE SCALE MRNA] OF 804-1117 (ISOFORM 1)</scope>
    <source>
        <tissue>Uterus</tissue>
    </source>
</reference>
<reference key="6">
    <citation type="journal article" date="2003" name="Biochim. Biophys. Acta">
        <title>Expression of ADAMTS metalloproteinases in the retinal pigment epithelium derived cell line ARPE-19: transcriptional regulation by TNFalpha.</title>
        <authorList>
            <person name="Bevitt D.J."/>
            <person name="Mohamed J."/>
            <person name="Catterall J.B."/>
            <person name="Li Z."/>
            <person name="Arris C.E."/>
            <person name="Hiscott P."/>
            <person name="Sheridan C."/>
            <person name="Langton K.P."/>
            <person name="Barker M.D."/>
            <person name="Clarke M.P."/>
            <person name="McKie N."/>
        </authorList>
    </citation>
    <scope>INDUCTION</scope>
</reference>
<protein>
    <recommendedName>
        <fullName>A disintegrin and metalloproteinase with thrombospondin motifs 6</fullName>
        <shortName>ADAM-TS 6</shortName>
        <shortName>ADAM-TS6</shortName>
        <shortName>ADAMTS-6</shortName>
        <ecNumber>3.4.24.-</ecNumber>
    </recommendedName>
</protein>
<gene>
    <name type="primary">ADAMTS6</name>
</gene>
<evidence type="ECO:0000250" key="1"/>
<evidence type="ECO:0000255" key="2"/>
<evidence type="ECO:0000255" key="3">
    <source>
        <dbReference type="PROSITE-ProRule" id="PRU00210"/>
    </source>
</evidence>
<evidence type="ECO:0000255" key="4">
    <source>
        <dbReference type="PROSITE-ProRule" id="PRU00233"/>
    </source>
</evidence>
<evidence type="ECO:0000255" key="5">
    <source>
        <dbReference type="PROSITE-ProRule" id="PRU00276"/>
    </source>
</evidence>
<evidence type="ECO:0000255" key="6">
    <source>
        <dbReference type="PROSITE-ProRule" id="PRU10095"/>
    </source>
</evidence>
<evidence type="ECO:0000269" key="7">
    <source>
    </source>
</evidence>
<evidence type="ECO:0000269" key="8">
    <source>
    </source>
</evidence>
<evidence type="ECO:0000303" key="9">
    <source>
    </source>
</evidence>
<evidence type="ECO:0000303" key="10">
    <source>
    </source>
</evidence>
<evidence type="ECO:0000305" key="11"/>
<organism>
    <name type="scientific">Homo sapiens</name>
    <name type="common">Human</name>
    <dbReference type="NCBI Taxonomy" id="9606"/>
    <lineage>
        <taxon>Eukaryota</taxon>
        <taxon>Metazoa</taxon>
        <taxon>Chordata</taxon>
        <taxon>Craniata</taxon>
        <taxon>Vertebrata</taxon>
        <taxon>Euteleostomi</taxon>
        <taxon>Mammalia</taxon>
        <taxon>Eutheria</taxon>
        <taxon>Euarchontoglires</taxon>
        <taxon>Primates</taxon>
        <taxon>Haplorrhini</taxon>
        <taxon>Catarrhini</taxon>
        <taxon>Hominidae</taxon>
        <taxon>Homo</taxon>
    </lineage>
</organism>
<dbReference type="EC" id="3.4.24.-"/>
<dbReference type="EMBL" id="AF140674">
    <property type="protein sequence ID" value="AAD56357.1"/>
    <property type="molecule type" value="mRNA"/>
</dbReference>
<dbReference type="EMBL" id="AY692424">
    <property type="protein sequence ID" value="AAW47397.1"/>
    <property type="molecule type" value="mRNA"/>
</dbReference>
<dbReference type="EMBL" id="AY692425">
    <property type="protein sequence ID" value="AAW47398.1"/>
    <property type="molecule type" value="mRNA"/>
</dbReference>
<dbReference type="EMBL" id="AY692426">
    <property type="protein sequence ID" value="AAW47399.1"/>
    <property type="molecule type" value="mRNA"/>
</dbReference>
<dbReference type="EMBL" id="AC008847">
    <property type="status" value="NOT_ANNOTATED_CDS"/>
    <property type="molecule type" value="Genomic_DNA"/>
</dbReference>
<dbReference type="EMBL" id="AC008868">
    <property type="status" value="NOT_ANNOTATED_CDS"/>
    <property type="molecule type" value="Genomic_DNA"/>
</dbReference>
<dbReference type="EMBL" id="AC025176">
    <property type="status" value="NOT_ANNOTATED_CDS"/>
    <property type="molecule type" value="Genomic_DNA"/>
</dbReference>
<dbReference type="EMBL" id="AC025186">
    <property type="status" value="NOT_ANNOTATED_CDS"/>
    <property type="molecule type" value="Genomic_DNA"/>
</dbReference>
<dbReference type="EMBL" id="AC099505">
    <property type="status" value="NOT_ANNOTATED_CDS"/>
    <property type="molecule type" value="Genomic_DNA"/>
</dbReference>
<dbReference type="EMBL" id="AB209685">
    <property type="protein sequence ID" value="BAD92922.1"/>
    <property type="molecule type" value="mRNA"/>
</dbReference>
<dbReference type="EMBL" id="CR749356">
    <property type="protein sequence ID" value="CAH18209.1"/>
    <property type="molecule type" value="mRNA"/>
</dbReference>
<dbReference type="CCDS" id="CCDS3983.2">
    <molecule id="Q9UKP5-1"/>
</dbReference>
<dbReference type="RefSeq" id="NP_922932.2">
    <molecule id="Q9UKP5-1"/>
    <property type="nucleotide sequence ID" value="NM_197941.4"/>
</dbReference>
<dbReference type="RefSeq" id="XP_011541415.1">
    <molecule id="Q9UKP5-1"/>
    <property type="nucleotide sequence ID" value="XM_011543113.4"/>
</dbReference>
<dbReference type="RefSeq" id="XP_011541416.1">
    <molecule id="Q9UKP5-1"/>
    <property type="nucleotide sequence ID" value="XM_011543114.4"/>
</dbReference>
<dbReference type="RefSeq" id="XP_054207494.1">
    <molecule id="Q9UKP5-1"/>
    <property type="nucleotide sequence ID" value="XM_054351519.1"/>
</dbReference>
<dbReference type="RefSeq" id="XP_054207495.1">
    <molecule id="Q9UKP5-1"/>
    <property type="nucleotide sequence ID" value="XM_054351520.1"/>
</dbReference>
<dbReference type="SMR" id="Q9UKP5"/>
<dbReference type="BioGRID" id="116345">
    <property type="interactions" value="9"/>
</dbReference>
<dbReference type="FunCoup" id="Q9UKP5">
    <property type="interactions" value="96"/>
</dbReference>
<dbReference type="IntAct" id="Q9UKP5">
    <property type="interactions" value="2"/>
</dbReference>
<dbReference type="MINT" id="Q9UKP5"/>
<dbReference type="STRING" id="9606.ENSP00000370443"/>
<dbReference type="BindingDB" id="Q9UKP5"/>
<dbReference type="MEROPS" id="M12.230"/>
<dbReference type="GlyCosmos" id="Q9UKP5">
    <property type="glycosylation" value="6 sites, No reported glycans"/>
</dbReference>
<dbReference type="GlyGen" id="Q9UKP5">
    <property type="glycosylation" value="7 sites"/>
</dbReference>
<dbReference type="iPTMnet" id="Q9UKP5"/>
<dbReference type="PhosphoSitePlus" id="Q9UKP5"/>
<dbReference type="BioMuta" id="ADAMTS6"/>
<dbReference type="DMDM" id="229462816"/>
<dbReference type="MassIVE" id="Q9UKP5"/>
<dbReference type="PaxDb" id="9606-ENSP00000370443"/>
<dbReference type="PeptideAtlas" id="Q9UKP5"/>
<dbReference type="ProteomicsDB" id="84830">
    <molecule id="Q9UKP5-2"/>
</dbReference>
<dbReference type="Antibodypedia" id="11532">
    <property type="antibodies" value="53 antibodies from 17 providers"/>
</dbReference>
<dbReference type="DNASU" id="11174"/>
<dbReference type="Ensembl" id="ENST00000381052.8">
    <molecule id="Q9UKP5-4"/>
    <property type="protein sequence ID" value="ENSP00000424377.1"/>
    <property type="gene ID" value="ENSG00000049192.15"/>
</dbReference>
<dbReference type="Ensembl" id="ENST00000381055.8">
    <molecule id="Q9UKP5-1"/>
    <property type="protein sequence ID" value="ENSP00000370443.3"/>
    <property type="gene ID" value="ENSG00000049192.15"/>
</dbReference>
<dbReference type="GeneID" id="11174"/>
<dbReference type="KEGG" id="hsa:11174"/>
<dbReference type="MANE-Select" id="ENST00000381055.8">
    <property type="protein sequence ID" value="ENSP00000370443.3"/>
    <property type="RefSeq nucleotide sequence ID" value="NM_197941.4"/>
    <property type="RefSeq protein sequence ID" value="NP_922932.2"/>
</dbReference>
<dbReference type="UCSC" id="uc003jtp.4">
    <molecule id="Q9UKP5-1"/>
    <property type="organism name" value="human"/>
</dbReference>
<dbReference type="AGR" id="HGNC:222"/>
<dbReference type="CTD" id="11174"/>
<dbReference type="DisGeNET" id="11174"/>
<dbReference type="GeneCards" id="ADAMTS6"/>
<dbReference type="HGNC" id="HGNC:222">
    <property type="gene designation" value="ADAMTS6"/>
</dbReference>
<dbReference type="HPA" id="ENSG00000049192">
    <property type="expression patterns" value="Tissue enhanced (placenta)"/>
</dbReference>
<dbReference type="MIM" id="605008">
    <property type="type" value="gene"/>
</dbReference>
<dbReference type="neXtProt" id="NX_Q9UKP5"/>
<dbReference type="OpenTargets" id="ENSG00000049192"/>
<dbReference type="PharmGKB" id="PA24550"/>
<dbReference type="VEuPathDB" id="HostDB:ENSG00000049192"/>
<dbReference type="eggNOG" id="KOG3538">
    <property type="taxonomic scope" value="Eukaryota"/>
</dbReference>
<dbReference type="eggNOG" id="KOG4597">
    <property type="taxonomic scope" value="Eukaryota"/>
</dbReference>
<dbReference type="GeneTree" id="ENSGT00940000156571"/>
<dbReference type="HOGENOM" id="CLU_000660_1_1_1"/>
<dbReference type="InParanoid" id="Q9UKP5"/>
<dbReference type="OMA" id="GPEWRHD"/>
<dbReference type="OrthoDB" id="10035764at2759"/>
<dbReference type="PAN-GO" id="Q9UKP5">
    <property type="GO annotations" value="3 GO annotations based on evolutionary models"/>
</dbReference>
<dbReference type="PhylomeDB" id="Q9UKP5"/>
<dbReference type="TreeFam" id="TF313537"/>
<dbReference type="PathwayCommons" id="Q9UKP5"/>
<dbReference type="Reactome" id="R-HSA-5083635">
    <property type="pathway name" value="Defective B3GALTL causes PpS"/>
</dbReference>
<dbReference type="Reactome" id="R-HSA-5173214">
    <property type="pathway name" value="O-glycosylation of TSR domain-containing proteins"/>
</dbReference>
<dbReference type="SignaLink" id="Q9UKP5"/>
<dbReference type="BioGRID-ORCS" id="11174">
    <property type="hits" value="6 hits in 1079 CRISPR screens"/>
</dbReference>
<dbReference type="ChiTaRS" id="ADAMTS6">
    <property type="organism name" value="human"/>
</dbReference>
<dbReference type="GenomeRNAi" id="11174"/>
<dbReference type="Pharos" id="Q9UKP5">
    <property type="development level" value="Tbio"/>
</dbReference>
<dbReference type="PRO" id="PR:Q9UKP5"/>
<dbReference type="Proteomes" id="UP000005640">
    <property type="component" value="Chromosome 5"/>
</dbReference>
<dbReference type="RNAct" id="Q9UKP5">
    <property type="molecule type" value="protein"/>
</dbReference>
<dbReference type="Bgee" id="ENSG00000049192">
    <property type="expression patterns" value="Expressed in tibia and 127 other cell types or tissues"/>
</dbReference>
<dbReference type="GO" id="GO:0031012">
    <property type="term" value="C:extracellular matrix"/>
    <property type="evidence" value="ECO:0000318"/>
    <property type="project" value="GO_Central"/>
</dbReference>
<dbReference type="GO" id="GO:0005576">
    <property type="term" value="C:extracellular region"/>
    <property type="evidence" value="ECO:0007669"/>
    <property type="project" value="UniProtKB-KW"/>
</dbReference>
<dbReference type="GO" id="GO:0046872">
    <property type="term" value="F:metal ion binding"/>
    <property type="evidence" value="ECO:0007669"/>
    <property type="project" value="UniProtKB-KW"/>
</dbReference>
<dbReference type="GO" id="GO:0004222">
    <property type="term" value="F:metalloendopeptidase activity"/>
    <property type="evidence" value="ECO:0000318"/>
    <property type="project" value="GO_Central"/>
</dbReference>
<dbReference type="GO" id="GO:0008237">
    <property type="term" value="F:metallopeptidase activity"/>
    <property type="evidence" value="ECO:0000304"/>
    <property type="project" value="ProtInc"/>
</dbReference>
<dbReference type="GO" id="GO:0035904">
    <property type="term" value="P:aorta development"/>
    <property type="evidence" value="ECO:0007669"/>
    <property type="project" value="Ensembl"/>
</dbReference>
<dbReference type="GO" id="GO:0003279">
    <property type="term" value="P:cardiac septum development"/>
    <property type="evidence" value="ECO:0007669"/>
    <property type="project" value="Ensembl"/>
</dbReference>
<dbReference type="GO" id="GO:0060976">
    <property type="term" value="P:coronary vasculature development"/>
    <property type="evidence" value="ECO:0007669"/>
    <property type="project" value="Ensembl"/>
</dbReference>
<dbReference type="GO" id="GO:0030198">
    <property type="term" value="P:extracellular matrix organization"/>
    <property type="evidence" value="ECO:0000318"/>
    <property type="project" value="GO_Central"/>
</dbReference>
<dbReference type="GO" id="GO:0001822">
    <property type="term" value="P:kidney development"/>
    <property type="evidence" value="ECO:0007669"/>
    <property type="project" value="Ensembl"/>
</dbReference>
<dbReference type="GO" id="GO:0006508">
    <property type="term" value="P:proteolysis"/>
    <property type="evidence" value="ECO:0000318"/>
    <property type="project" value="GO_Central"/>
</dbReference>
<dbReference type="CDD" id="cd04273">
    <property type="entry name" value="ZnMc_ADAMTS_like"/>
    <property type="match status" value="1"/>
</dbReference>
<dbReference type="FunFam" id="2.20.100.10:FF:000006">
    <property type="entry name" value="A disintegrin and metalloproteinase with thrombospondin motifs 1"/>
    <property type="match status" value="1"/>
</dbReference>
<dbReference type="FunFam" id="2.60.120.830:FF:000001">
    <property type="entry name" value="A disintegrin and metalloproteinase with thrombospondin motifs 1"/>
    <property type="match status" value="1"/>
</dbReference>
<dbReference type="FunFam" id="3.40.390.10:FF:000001">
    <property type="entry name" value="A disintegrin and metalloproteinase with thrombospondin motifs 1"/>
    <property type="match status" value="1"/>
</dbReference>
<dbReference type="FunFam" id="3.40.1620.60:FF:000002">
    <property type="entry name" value="A disintegrin and metalloproteinase with thrombospondin motifs 10"/>
    <property type="match status" value="1"/>
</dbReference>
<dbReference type="FunFam" id="2.20.100.10:FF:000079">
    <property type="entry name" value="ADAM metallopeptidase with thrombospondin type 1 motif 17"/>
    <property type="match status" value="1"/>
</dbReference>
<dbReference type="FunFam" id="2.20.100.10:FF:000005">
    <property type="entry name" value="ADAM metallopeptidase with thrombospondin type 1 motif 9"/>
    <property type="match status" value="1"/>
</dbReference>
<dbReference type="FunFam" id="2.20.100.10:FF:000029">
    <property type="entry name" value="ADAM metallopeptidase with thrombospondin type 1 motif, 6"/>
    <property type="match status" value="1"/>
</dbReference>
<dbReference type="Gene3D" id="2.60.120.830">
    <property type="match status" value="1"/>
</dbReference>
<dbReference type="Gene3D" id="3.40.1620.60">
    <property type="match status" value="1"/>
</dbReference>
<dbReference type="Gene3D" id="3.40.390.10">
    <property type="entry name" value="Collagenase (Catalytic Domain)"/>
    <property type="match status" value="1"/>
</dbReference>
<dbReference type="Gene3D" id="2.20.100.10">
    <property type="entry name" value="Thrombospondin type-1 (TSP1) repeat"/>
    <property type="match status" value="5"/>
</dbReference>
<dbReference type="InterPro" id="IPR013273">
    <property type="entry name" value="ADAMTS/ADAMTS-like"/>
</dbReference>
<dbReference type="InterPro" id="IPR050439">
    <property type="entry name" value="ADAMTS_ADAMTS-like"/>
</dbReference>
<dbReference type="InterPro" id="IPR041645">
    <property type="entry name" value="ADAMTS_CR_2"/>
</dbReference>
<dbReference type="InterPro" id="IPR045371">
    <property type="entry name" value="ADAMTS_CR_3"/>
</dbReference>
<dbReference type="InterPro" id="IPR010294">
    <property type="entry name" value="ADAMTS_spacer1"/>
</dbReference>
<dbReference type="InterPro" id="IPR024079">
    <property type="entry name" value="MetalloPept_cat_dom_sf"/>
</dbReference>
<dbReference type="InterPro" id="IPR001590">
    <property type="entry name" value="Peptidase_M12B"/>
</dbReference>
<dbReference type="InterPro" id="IPR002870">
    <property type="entry name" value="Peptidase_M12B_N"/>
</dbReference>
<dbReference type="InterPro" id="IPR010909">
    <property type="entry name" value="PLAC"/>
</dbReference>
<dbReference type="InterPro" id="IPR000884">
    <property type="entry name" value="TSP1_rpt"/>
</dbReference>
<dbReference type="InterPro" id="IPR036383">
    <property type="entry name" value="TSP1_rpt_sf"/>
</dbReference>
<dbReference type="PANTHER" id="PTHR13723:SF27">
    <property type="entry name" value="A DISINTEGRIN AND METALLOPROTEINASE WITH THROMBOSPONDIN MOTIFS 6"/>
    <property type="match status" value="1"/>
</dbReference>
<dbReference type="PANTHER" id="PTHR13723">
    <property type="entry name" value="ADAMTS A DISINTEGRIN AND METALLOPROTEASE WITH THROMBOSPONDIN MOTIFS PROTEASE"/>
    <property type="match status" value="1"/>
</dbReference>
<dbReference type="Pfam" id="PF17771">
    <property type="entry name" value="ADAMTS_CR_2"/>
    <property type="match status" value="1"/>
</dbReference>
<dbReference type="Pfam" id="PF19236">
    <property type="entry name" value="ADAMTS_CR_3"/>
    <property type="match status" value="1"/>
</dbReference>
<dbReference type="Pfam" id="PF05986">
    <property type="entry name" value="ADAMTS_spacer1"/>
    <property type="match status" value="1"/>
</dbReference>
<dbReference type="Pfam" id="PF01562">
    <property type="entry name" value="Pep_M12B_propep"/>
    <property type="match status" value="1"/>
</dbReference>
<dbReference type="Pfam" id="PF08686">
    <property type="entry name" value="PLAC"/>
    <property type="match status" value="1"/>
</dbReference>
<dbReference type="Pfam" id="PF01421">
    <property type="entry name" value="Reprolysin"/>
    <property type="match status" value="1"/>
</dbReference>
<dbReference type="Pfam" id="PF19030">
    <property type="entry name" value="TSP1_ADAMTS"/>
    <property type="match status" value="4"/>
</dbReference>
<dbReference type="Pfam" id="PF00090">
    <property type="entry name" value="TSP_1"/>
    <property type="match status" value="1"/>
</dbReference>
<dbReference type="PRINTS" id="PR01857">
    <property type="entry name" value="ADAMTSFAMILY"/>
</dbReference>
<dbReference type="SMART" id="SM00209">
    <property type="entry name" value="TSP1"/>
    <property type="match status" value="5"/>
</dbReference>
<dbReference type="SUPFAM" id="SSF55486">
    <property type="entry name" value="Metalloproteases ('zincins'), catalytic domain"/>
    <property type="match status" value="1"/>
</dbReference>
<dbReference type="SUPFAM" id="SSF82895">
    <property type="entry name" value="TSP-1 type 1 repeat"/>
    <property type="match status" value="5"/>
</dbReference>
<dbReference type="PROSITE" id="PS50215">
    <property type="entry name" value="ADAM_MEPRO"/>
    <property type="match status" value="1"/>
</dbReference>
<dbReference type="PROSITE" id="PS50900">
    <property type="entry name" value="PLAC"/>
    <property type="match status" value="1"/>
</dbReference>
<dbReference type="PROSITE" id="PS50092">
    <property type="entry name" value="TSP1"/>
    <property type="match status" value="4"/>
</dbReference>
<dbReference type="PROSITE" id="PS00142">
    <property type="entry name" value="ZINC_PROTEASE"/>
    <property type="match status" value="1"/>
</dbReference>
<name>ATS6_HUMAN</name>